<evidence type="ECO:0000255" key="1">
    <source>
        <dbReference type="HAMAP-Rule" id="MF_01302"/>
    </source>
</evidence>
<evidence type="ECO:0000305" key="2"/>
<proteinExistence type="inferred from homology"/>
<gene>
    <name evidence="1" type="primary">rpsH</name>
    <name type="ordered locus">RHA1_ro06147</name>
</gene>
<name>RS8_RHOJR</name>
<sequence length="132" mass="14414">MTMTDPIADFLTRLRNANTAYHDEVKLPHSKIKANIAEILKREGYIADYRTEDAEVGKTLIVDLKYGPSRERSLAGVRRVSKPGLRVYAKSTNLPKVLGGLGVAIISTSTGLLTDRQAANQGVGGEVLAYVW</sequence>
<protein>
    <recommendedName>
        <fullName evidence="1">Small ribosomal subunit protein uS8</fullName>
    </recommendedName>
    <alternativeName>
        <fullName evidence="2">30S ribosomal protein S8</fullName>
    </alternativeName>
</protein>
<keyword id="KW-0687">Ribonucleoprotein</keyword>
<keyword id="KW-0689">Ribosomal protein</keyword>
<keyword id="KW-0694">RNA-binding</keyword>
<keyword id="KW-0699">rRNA-binding</keyword>
<reference key="1">
    <citation type="journal article" date="2006" name="Proc. Natl. Acad. Sci. U.S.A.">
        <title>The complete genome of Rhodococcus sp. RHA1 provides insights into a catabolic powerhouse.</title>
        <authorList>
            <person name="McLeod M.P."/>
            <person name="Warren R.L."/>
            <person name="Hsiao W.W.L."/>
            <person name="Araki N."/>
            <person name="Myhre M."/>
            <person name="Fernandes C."/>
            <person name="Miyazawa D."/>
            <person name="Wong W."/>
            <person name="Lillquist A.L."/>
            <person name="Wang D."/>
            <person name="Dosanjh M."/>
            <person name="Hara H."/>
            <person name="Petrescu A."/>
            <person name="Morin R.D."/>
            <person name="Yang G."/>
            <person name="Stott J.M."/>
            <person name="Schein J.E."/>
            <person name="Shin H."/>
            <person name="Smailus D."/>
            <person name="Siddiqui A.S."/>
            <person name="Marra M.A."/>
            <person name="Jones S.J.M."/>
            <person name="Holt R."/>
            <person name="Brinkman F.S.L."/>
            <person name="Miyauchi K."/>
            <person name="Fukuda M."/>
            <person name="Davies J.E."/>
            <person name="Mohn W.W."/>
            <person name="Eltis L.D."/>
        </authorList>
    </citation>
    <scope>NUCLEOTIDE SEQUENCE [LARGE SCALE GENOMIC DNA]</scope>
    <source>
        <strain>RHA1</strain>
    </source>
</reference>
<feature type="chain" id="PRO_0000290913" description="Small ribosomal subunit protein uS8">
    <location>
        <begin position="1"/>
        <end position="132"/>
    </location>
</feature>
<dbReference type="EMBL" id="CP000431">
    <property type="protein sequence ID" value="ABG97924.1"/>
    <property type="molecule type" value="Genomic_DNA"/>
</dbReference>
<dbReference type="RefSeq" id="WP_005239657.1">
    <property type="nucleotide sequence ID" value="NC_008268.1"/>
</dbReference>
<dbReference type="SMR" id="Q0S3G2"/>
<dbReference type="GeneID" id="69890530"/>
<dbReference type="KEGG" id="rha:RHA1_ro06147"/>
<dbReference type="eggNOG" id="COG0096">
    <property type="taxonomic scope" value="Bacteria"/>
</dbReference>
<dbReference type="HOGENOM" id="CLU_098428_0_1_11"/>
<dbReference type="OrthoDB" id="9802617at2"/>
<dbReference type="Proteomes" id="UP000008710">
    <property type="component" value="Chromosome"/>
</dbReference>
<dbReference type="GO" id="GO:1990904">
    <property type="term" value="C:ribonucleoprotein complex"/>
    <property type="evidence" value="ECO:0007669"/>
    <property type="project" value="UniProtKB-KW"/>
</dbReference>
<dbReference type="GO" id="GO:0005840">
    <property type="term" value="C:ribosome"/>
    <property type="evidence" value="ECO:0007669"/>
    <property type="project" value="UniProtKB-KW"/>
</dbReference>
<dbReference type="GO" id="GO:0019843">
    <property type="term" value="F:rRNA binding"/>
    <property type="evidence" value="ECO:0007669"/>
    <property type="project" value="UniProtKB-UniRule"/>
</dbReference>
<dbReference type="GO" id="GO:0003735">
    <property type="term" value="F:structural constituent of ribosome"/>
    <property type="evidence" value="ECO:0007669"/>
    <property type="project" value="InterPro"/>
</dbReference>
<dbReference type="GO" id="GO:0006412">
    <property type="term" value="P:translation"/>
    <property type="evidence" value="ECO:0007669"/>
    <property type="project" value="UniProtKB-UniRule"/>
</dbReference>
<dbReference type="FunFam" id="3.30.1370.30:FF:000002">
    <property type="entry name" value="30S ribosomal protein S8"/>
    <property type="match status" value="1"/>
</dbReference>
<dbReference type="FunFam" id="3.30.1490.10:FF:000001">
    <property type="entry name" value="30S ribosomal protein S8"/>
    <property type="match status" value="1"/>
</dbReference>
<dbReference type="Gene3D" id="3.30.1370.30">
    <property type="match status" value="1"/>
</dbReference>
<dbReference type="Gene3D" id="3.30.1490.10">
    <property type="match status" value="1"/>
</dbReference>
<dbReference type="HAMAP" id="MF_01302_B">
    <property type="entry name" value="Ribosomal_uS8_B"/>
    <property type="match status" value="1"/>
</dbReference>
<dbReference type="InterPro" id="IPR000630">
    <property type="entry name" value="Ribosomal_uS8"/>
</dbReference>
<dbReference type="InterPro" id="IPR047863">
    <property type="entry name" value="Ribosomal_uS8_CS"/>
</dbReference>
<dbReference type="InterPro" id="IPR035987">
    <property type="entry name" value="Ribosomal_uS8_sf"/>
</dbReference>
<dbReference type="NCBIfam" id="NF001109">
    <property type="entry name" value="PRK00136.1"/>
    <property type="match status" value="1"/>
</dbReference>
<dbReference type="PANTHER" id="PTHR11758">
    <property type="entry name" value="40S RIBOSOMAL PROTEIN S15A"/>
    <property type="match status" value="1"/>
</dbReference>
<dbReference type="Pfam" id="PF00410">
    <property type="entry name" value="Ribosomal_S8"/>
    <property type="match status" value="1"/>
</dbReference>
<dbReference type="SUPFAM" id="SSF56047">
    <property type="entry name" value="Ribosomal protein S8"/>
    <property type="match status" value="1"/>
</dbReference>
<dbReference type="PROSITE" id="PS00053">
    <property type="entry name" value="RIBOSOMAL_S8"/>
    <property type="match status" value="1"/>
</dbReference>
<accession>Q0S3G2</accession>
<organism>
    <name type="scientific">Rhodococcus jostii (strain RHA1)</name>
    <dbReference type="NCBI Taxonomy" id="101510"/>
    <lineage>
        <taxon>Bacteria</taxon>
        <taxon>Bacillati</taxon>
        <taxon>Actinomycetota</taxon>
        <taxon>Actinomycetes</taxon>
        <taxon>Mycobacteriales</taxon>
        <taxon>Nocardiaceae</taxon>
        <taxon>Rhodococcus</taxon>
    </lineage>
</organism>
<comment type="function">
    <text evidence="1">One of the primary rRNA binding proteins, it binds directly to 16S rRNA central domain where it helps coordinate assembly of the platform of the 30S subunit.</text>
</comment>
<comment type="subunit">
    <text evidence="1">Part of the 30S ribosomal subunit. Contacts proteins S5 and S12.</text>
</comment>
<comment type="similarity">
    <text evidence="1">Belongs to the universal ribosomal protein uS8 family.</text>
</comment>